<reference key="1">
    <citation type="submission" date="2006-08" db="EMBL/GenBank/DDBJ databases">
        <title>Complete sequence of chromosome 1 of Burkholderia cepacia AMMD.</title>
        <authorList>
            <person name="Copeland A."/>
            <person name="Lucas S."/>
            <person name="Lapidus A."/>
            <person name="Barry K."/>
            <person name="Detter J.C."/>
            <person name="Glavina del Rio T."/>
            <person name="Hammon N."/>
            <person name="Israni S."/>
            <person name="Pitluck S."/>
            <person name="Bruce D."/>
            <person name="Chain P."/>
            <person name="Malfatti S."/>
            <person name="Shin M."/>
            <person name="Vergez L."/>
            <person name="Schmutz J."/>
            <person name="Larimer F."/>
            <person name="Land M."/>
            <person name="Hauser L."/>
            <person name="Kyrpides N."/>
            <person name="Kim E."/>
            <person name="Parke J."/>
            <person name="Coenye T."/>
            <person name="Konstantinidis K."/>
            <person name="Ramette A."/>
            <person name="Tiedje J."/>
            <person name="Richardson P."/>
        </authorList>
    </citation>
    <scope>NUCLEOTIDE SEQUENCE [LARGE SCALE GENOMIC DNA]</scope>
    <source>
        <strain>ATCC BAA-244 / DSM 16087 / CCUG 44356 / LMG 19182 / AMMD</strain>
    </source>
</reference>
<organism>
    <name type="scientific">Burkholderia ambifaria (strain ATCC BAA-244 / DSM 16087 / CCUG 44356 / LMG 19182 / AMMD)</name>
    <name type="common">Burkholderia cepacia (strain AMMD)</name>
    <dbReference type="NCBI Taxonomy" id="339670"/>
    <lineage>
        <taxon>Bacteria</taxon>
        <taxon>Pseudomonadati</taxon>
        <taxon>Pseudomonadota</taxon>
        <taxon>Betaproteobacteria</taxon>
        <taxon>Burkholderiales</taxon>
        <taxon>Burkholderiaceae</taxon>
        <taxon>Burkholderia</taxon>
        <taxon>Burkholderia cepacia complex</taxon>
    </lineage>
</organism>
<gene>
    <name evidence="1" type="primary">hisA</name>
    <name type="ordered locus">Bamb_0348</name>
</gene>
<feature type="chain" id="PRO_0000290457" description="1-(5-phosphoribosyl)-5-[(5-phosphoribosylamino)methylideneamino] imidazole-4-carboxamide isomerase">
    <location>
        <begin position="1"/>
        <end position="251"/>
    </location>
</feature>
<feature type="active site" description="Proton acceptor" evidence="1">
    <location>
        <position position="8"/>
    </location>
</feature>
<feature type="active site" description="Proton donor" evidence="1">
    <location>
        <position position="131"/>
    </location>
</feature>
<name>HIS4_BURCM</name>
<keyword id="KW-0028">Amino-acid biosynthesis</keyword>
<keyword id="KW-0963">Cytoplasm</keyword>
<keyword id="KW-0368">Histidine biosynthesis</keyword>
<keyword id="KW-0413">Isomerase</keyword>
<accession>Q0BIW5</accession>
<sequence length="251" mass="26541">MLLIPAIDLKDGQCVRLKQGDMDQATIFSEDPAAMARKWVDLGARRLHLVDLNGAFAGKPKNLDAIEAILDEVGDEIPVQLGGGIRSLETVEKYLDAGLSYVIIGTAAVKDPGFLRDACTAFAGNIIVGLDAKDGKVATDGWSKLTGHEVIDLALKFEDYGVESIVYTDIGRDGMLQGINIEATVKLAQAVGIPVIASGGLSNLADIDSLCEVEEHGVEGVICGRAIYSGDLDFAAAQKRADELNGELDNA</sequence>
<dbReference type="EC" id="5.3.1.16" evidence="1"/>
<dbReference type="EMBL" id="CP000440">
    <property type="protein sequence ID" value="ABI85908.1"/>
    <property type="molecule type" value="Genomic_DNA"/>
</dbReference>
<dbReference type="RefSeq" id="WP_006751801.1">
    <property type="nucleotide sequence ID" value="NZ_CP009798.1"/>
</dbReference>
<dbReference type="SMR" id="Q0BIW5"/>
<dbReference type="GeneID" id="93084238"/>
<dbReference type="KEGG" id="bam:Bamb_0348"/>
<dbReference type="PATRIC" id="fig|339670.21.peg.1270"/>
<dbReference type="eggNOG" id="COG0106">
    <property type="taxonomic scope" value="Bacteria"/>
</dbReference>
<dbReference type="UniPathway" id="UPA00031">
    <property type="reaction ID" value="UER00009"/>
</dbReference>
<dbReference type="Proteomes" id="UP000000662">
    <property type="component" value="Chromosome 1"/>
</dbReference>
<dbReference type="GO" id="GO:0005737">
    <property type="term" value="C:cytoplasm"/>
    <property type="evidence" value="ECO:0007669"/>
    <property type="project" value="UniProtKB-SubCell"/>
</dbReference>
<dbReference type="GO" id="GO:0003949">
    <property type="term" value="F:1-(5-phosphoribosyl)-5-[(5-phosphoribosylamino)methylideneamino]imidazole-4-carboxamide isomerase activity"/>
    <property type="evidence" value="ECO:0007669"/>
    <property type="project" value="UniProtKB-UniRule"/>
</dbReference>
<dbReference type="GO" id="GO:0000105">
    <property type="term" value="P:L-histidine biosynthetic process"/>
    <property type="evidence" value="ECO:0007669"/>
    <property type="project" value="UniProtKB-UniRule"/>
</dbReference>
<dbReference type="GO" id="GO:0000162">
    <property type="term" value="P:L-tryptophan biosynthetic process"/>
    <property type="evidence" value="ECO:0007669"/>
    <property type="project" value="TreeGrafter"/>
</dbReference>
<dbReference type="CDD" id="cd04732">
    <property type="entry name" value="HisA"/>
    <property type="match status" value="1"/>
</dbReference>
<dbReference type="FunFam" id="3.20.20.70:FF:000009">
    <property type="entry name" value="1-(5-phosphoribosyl)-5-[(5-phosphoribosylamino)methylideneamino] imidazole-4-carboxamide isomerase"/>
    <property type="match status" value="1"/>
</dbReference>
<dbReference type="Gene3D" id="3.20.20.70">
    <property type="entry name" value="Aldolase class I"/>
    <property type="match status" value="1"/>
</dbReference>
<dbReference type="HAMAP" id="MF_01014">
    <property type="entry name" value="HisA"/>
    <property type="match status" value="1"/>
</dbReference>
<dbReference type="InterPro" id="IPR013785">
    <property type="entry name" value="Aldolase_TIM"/>
</dbReference>
<dbReference type="InterPro" id="IPR006062">
    <property type="entry name" value="His_biosynth"/>
</dbReference>
<dbReference type="InterPro" id="IPR006063">
    <property type="entry name" value="HisA_bact_arch"/>
</dbReference>
<dbReference type="InterPro" id="IPR044524">
    <property type="entry name" value="Isoase_HisA-like"/>
</dbReference>
<dbReference type="InterPro" id="IPR023016">
    <property type="entry name" value="Isoase_HisA-like_bact"/>
</dbReference>
<dbReference type="InterPro" id="IPR011060">
    <property type="entry name" value="RibuloseP-bd_barrel"/>
</dbReference>
<dbReference type="NCBIfam" id="TIGR00007">
    <property type="entry name" value="1-(5-phosphoribosyl)-5-[(5-phosphoribosylamino)methylideneamino]imidazole-4-carboxamide isomerase"/>
    <property type="match status" value="1"/>
</dbReference>
<dbReference type="NCBIfam" id="NF010112">
    <property type="entry name" value="PRK13585.1"/>
    <property type="match status" value="1"/>
</dbReference>
<dbReference type="PANTHER" id="PTHR43090">
    <property type="entry name" value="1-(5-PHOSPHORIBOSYL)-5-[(5-PHOSPHORIBOSYLAMINO)METHYLIDENEAMINO] IMIDAZOLE-4-CARBOXAMIDE ISOMERASE"/>
    <property type="match status" value="1"/>
</dbReference>
<dbReference type="PANTHER" id="PTHR43090:SF2">
    <property type="entry name" value="1-(5-PHOSPHORIBOSYL)-5-[(5-PHOSPHORIBOSYLAMINO)METHYLIDENEAMINO] IMIDAZOLE-4-CARBOXAMIDE ISOMERASE"/>
    <property type="match status" value="1"/>
</dbReference>
<dbReference type="Pfam" id="PF00977">
    <property type="entry name" value="His_biosynth"/>
    <property type="match status" value="1"/>
</dbReference>
<dbReference type="SUPFAM" id="SSF51366">
    <property type="entry name" value="Ribulose-phoshate binding barrel"/>
    <property type="match status" value="1"/>
</dbReference>
<evidence type="ECO:0000255" key="1">
    <source>
        <dbReference type="HAMAP-Rule" id="MF_01014"/>
    </source>
</evidence>
<proteinExistence type="inferred from homology"/>
<protein>
    <recommendedName>
        <fullName evidence="1">1-(5-phosphoribosyl)-5-[(5-phosphoribosylamino)methylideneamino] imidazole-4-carboxamide isomerase</fullName>
        <ecNumber evidence="1">5.3.1.16</ecNumber>
    </recommendedName>
    <alternativeName>
        <fullName evidence="1">Phosphoribosylformimino-5-aminoimidazole carboxamide ribotide isomerase</fullName>
    </alternativeName>
</protein>
<comment type="catalytic activity">
    <reaction evidence="1">
        <text>1-(5-phospho-beta-D-ribosyl)-5-[(5-phospho-beta-D-ribosylamino)methylideneamino]imidazole-4-carboxamide = 5-[(5-phospho-1-deoxy-D-ribulos-1-ylimino)methylamino]-1-(5-phospho-beta-D-ribosyl)imidazole-4-carboxamide</text>
        <dbReference type="Rhea" id="RHEA:15469"/>
        <dbReference type="ChEBI" id="CHEBI:58435"/>
        <dbReference type="ChEBI" id="CHEBI:58525"/>
        <dbReference type="EC" id="5.3.1.16"/>
    </reaction>
</comment>
<comment type="pathway">
    <text evidence="1">Amino-acid biosynthesis; L-histidine biosynthesis; L-histidine from 5-phospho-alpha-D-ribose 1-diphosphate: step 4/9.</text>
</comment>
<comment type="subcellular location">
    <subcellularLocation>
        <location evidence="1">Cytoplasm</location>
    </subcellularLocation>
</comment>
<comment type="similarity">
    <text evidence="1">Belongs to the HisA/HisF family.</text>
</comment>